<accession>P0AE42</accession>
<accession>P77240</accession>
<name>YQAE_ECOLI</name>
<comment type="subcellular location">
    <subcellularLocation>
        <location evidence="2">Cell membrane</location>
        <topology evidence="2">Multi-pass membrane protein</topology>
    </subcellularLocation>
</comment>
<comment type="similarity">
    <text evidence="2">Belongs to the UPF0057 (PMP3) family.</text>
</comment>
<sequence>MGFWRIVITIILPPLGVLLGKGFGWAFIINILLTLLGYIPGLIHAFWVQTRD</sequence>
<feature type="chain" id="PRO_0000193997" description="UPF0057 membrane protein YqaE">
    <location>
        <begin position="1"/>
        <end position="52"/>
    </location>
</feature>
<feature type="transmembrane region" description="Helical" evidence="1">
    <location>
        <begin position="1"/>
        <end position="21"/>
    </location>
</feature>
<feature type="transmembrane region" description="Helical" evidence="1">
    <location>
        <begin position="23"/>
        <end position="43"/>
    </location>
</feature>
<organism>
    <name type="scientific">Escherichia coli (strain K12)</name>
    <dbReference type="NCBI Taxonomy" id="83333"/>
    <lineage>
        <taxon>Bacteria</taxon>
        <taxon>Pseudomonadati</taxon>
        <taxon>Pseudomonadota</taxon>
        <taxon>Gammaproteobacteria</taxon>
        <taxon>Enterobacterales</taxon>
        <taxon>Enterobacteriaceae</taxon>
        <taxon>Escherichia</taxon>
    </lineage>
</organism>
<dbReference type="EMBL" id="U00096">
    <property type="protein sequence ID" value="AAC75713.1"/>
    <property type="molecule type" value="Genomic_DNA"/>
</dbReference>
<dbReference type="EMBL" id="AP009048">
    <property type="protein sequence ID" value="BAA16529.1"/>
    <property type="molecule type" value="Genomic_DNA"/>
</dbReference>
<dbReference type="PIR" id="C65046">
    <property type="entry name" value="C65046"/>
</dbReference>
<dbReference type="RefSeq" id="NP_417152.1">
    <property type="nucleotide sequence ID" value="NC_000913.3"/>
</dbReference>
<dbReference type="RefSeq" id="WP_000508177.1">
    <property type="nucleotide sequence ID" value="NZ_STEB01000042.1"/>
</dbReference>
<dbReference type="SMR" id="P0AE42"/>
<dbReference type="BioGRID" id="4259219">
    <property type="interactions" value="104"/>
</dbReference>
<dbReference type="FunCoup" id="P0AE42">
    <property type="interactions" value="164"/>
</dbReference>
<dbReference type="STRING" id="511145.b2666"/>
<dbReference type="TCDB" id="9.B.12.2.1">
    <property type="family name" value="the sensitivity to sodium or salt stress-induced hydrophobic peptide (sna) family"/>
</dbReference>
<dbReference type="PaxDb" id="511145-b2666"/>
<dbReference type="EnsemblBacteria" id="AAC75713">
    <property type="protein sequence ID" value="AAC75713"/>
    <property type="gene ID" value="b2666"/>
</dbReference>
<dbReference type="GeneID" id="947138"/>
<dbReference type="KEGG" id="ecj:JW2641"/>
<dbReference type="KEGG" id="eco:b2666"/>
<dbReference type="KEGG" id="ecoc:C3026_14695"/>
<dbReference type="PATRIC" id="fig|1411691.4.peg.4075"/>
<dbReference type="EchoBASE" id="EB4060"/>
<dbReference type="eggNOG" id="COG0401">
    <property type="taxonomic scope" value="Bacteria"/>
</dbReference>
<dbReference type="HOGENOM" id="CLU_107649_7_1_6"/>
<dbReference type="InParanoid" id="P0AE42"/>
<dbReference type="OMA" id="VHAIWVI"/>
<dbReference type="OrthoDB" id="9810121at2"/>
<dbReference type="PhylomeDB" id="P0AE42"/>
<dbReference type="BioCyc" id="EcoCyc:G7396-MONOMER"/>
<dbReference type="PRO" id="PR:P0AE42"/>
<dbReference type="Proteomes" id="UP000000625">
    <property type="component" value="Chromosome"/>
</dbReference>
<dbReference type="GO" id="GO:0005886">
    <property type="term" value="C:plasma membrane"/>
    <property type="evidence" value="ECO:0007669"/>
    <property type="project" value="UniProtKB-SubCell"/>
</dbReference>
<dbReference type="GO" id="GO:0046677">
    <property type="term" value="P:response to antibiotic"/>
    <property type="evidence" value="ECO:0000315"/>
    <property type="project" value="EcoCyc"/>
</dbReference>
<dbReference type="InterPro" id="IPR000612">
    <property type="entry name" value="PMP3"/>
</dbReference>
<dbReference type="PANTHER" id="PTHR21659">
    <property type="entry name" value="HYDROPHOBIC PROTEIN RCI2 LOW TEMPERATURE AND SALT RESPONSIVE PROTEIN LTI6 -RELATED"/>
    <property type="match status" value="1"/>
</dbReference>
<dbReference type="PANTHER" id="PTHR21659:SF42">
    <property type="entry name" value="UPF0057 MEMBRANE PROTEIN ZK632.10-RELATED"/>
    <property type="match status" value="1"/>
</dbReference>
<dbReference type="Pfam" id="PF01679">
    <property type="entry name" value="Pmp3"/>
    <property type="match status" value="1"/>
</dbReference>
<dbReference type="PROSITE" id="PS01309">
    <property type="entry name" value="UPF0057"/>
    <property type="match status" value="1"/>
</dbReference>
<keyword id="KW-1003">Cell membrane</keyword>
<keyword id="KW-0472">Membrane</keyword>
<keyword id="KW-1185">Reference proteome</keyword>
<keyword id="KW-0812">Transmembrane</keyword>
<keyword id="KW-1133">Transmembrane helix</keyword>
<proteinExistence type="inferred from homology"/>
<protein>
    <recommendedName>
        <fullName>UPF0057 membrane protein YqaE</fullName>
    </recommendedName>
</protein>
<reference key="1">
    <citation type="journal article" date="1997" name="DNA Res.">
        <title>Construction of a contiguous 874-kb sequence of the Escherichia coli-K12 genome corresponding to 50.0-68.8 min on the linkage map and analysis of its sequence features.</title>
        <authorList>
            <person name="Yamamoto Y."/>
            <person name="Aiba H."/>
            <person name="Baba T."/>
            <person name="Hayashi K."/>
            <person name="Inada T."/>
            <person name="Isono K."/>
            <person name="Itoh T."/>
            <person name="Kimura S."/>
            <person name="Kitagawa M."/>
            <person name="Makino K."/>
            <person name="Miki T."/>
            <person name="Mitsuhashi N."/>
            <person name="Mizobuchi K."/>
            <person name="Mori H."/>
            <person name="Nakade S."/>
            <person name="Nakamura Y."/>
            <person name="Nashimoto H."/>
            <person name="Oshima T."/>
            <person name="Oyama S."/>
            <person name="Saito N."/>
            <person name="Sampei G."/>
            <person name="Satoh Y."/>
            <person name="Sivasundaram S."/>
            <person name="Tagami H."/>
            <person name="Takahashi H."/>
            <person name="Takeda J."/>
            <person name="Takemoto K."/>
            <person name="Uehara K."/>
            <person name="Wada C."/>
            <person name="Yamagata S."/>
            <person name="Horiuchi T."/>
        </authorList>
    </citation>
    <scope>NUCLEOTIDE SEQUENCE [LARGE SCALE GENOMIC DNA]</scope>
    <source>
        <strain>K12 / W3110 / ATCC 27325 / DSM 5911</strain>
    </source>
</reference>
<reference key="2">
    <citation type="journal article" date="1997" name="Science">
        <title>The complete genome sequence of Escherichia coli K-12.</title>
        <authorList>
            <person name="Blattner F.R."/>
            <person name="Plunkett G. III"/>
            <person name="Bloch C.A."/>
            <person name="Perna N.T."/>
            <person name="Burland V."/>
            <person name="Riley M."/>
            <person name="Collado-Vides J."/>
            <person name="Glasner J.D."/>
            <person name="Rode C.K."/>
            <person name="Mayhew G.F."/>
            <person name="Gregor J."/>
            <person name="Davis N.W."/>
            <person name="Kirkpatrick H.A."/>
            <person name="Goeden M.A."/>
            <person name="Rose D.J."/>
            <person name="Mau B."/>
            <person name="Shao Y."/>
        </authorList>
    </citation>
    <scope>NUCLEOTIDE SEQUENCE [LARGE SCALE GENOMIC DNA]</scope>
    <source>
        <strain>K12 / MG1655 / ATCC 47076</strain>
    </source>
</reference>
<reference key="3">
    <citation type="journal article" date="2006" name="Mol. Syst. Biol.">
        <title>Highly accurate genome sequences of Escherichia coli K-12 strains MG1655 and W3110.</title>
        <authorList>
            <person name="Hayashi K."/>
            <person name="Morooka N."/>
            <person name="Yamamoto Y."/>
            <person name="Fujita K."/>
            <person name="Isono K."/>
            <person name="Choi S."/>
            <person name="Ohtsubo E."/>
            <person name="Baba T."/>
            <person name="Wanner B.L."/>
            <person name="Mori H."/>
            <person name="Horiuchi T."/>
        </authorList>
    </citation>
    <scope>NUCLEOTIDE SEQUENCE [LARGE SCALE GENOMIC DNA]</scope>
    <source>
        <strain>K12 / W3110 / ATCC 27325 / DSM 5911</strain>
    </source>
</reference>
<gene>
    <name type="primary">yqaE</name>
    <name type="ordered locus">b2666</name>
    <name type="ordered locus">JW2641</name>
</gene>
<evidence type="ECO:0000255" key="1"/>
<evidence type="ECO:0000305" key="2"/>